<reference key="1">
    <citation type="journal article" date="2009" name="PLoS Genet.">
        <title>The complete genome and proteome of Laribacter hongkongensis reveal potential mechanisms for adaptations to different temperatures and habitats.</title>
        <authorList>
            <person name="Woo P.C.Y."/>
            <person name="Lau S.K.P."/>
            <person name="Tse H."/>
            <person name="Teng J.L.L."/>
            <person name="Curreem S.O."/>
            <person name="Tsang A.K.L."/>
            <person name="Fan R.Y.Y."/>
            <person name="Wong G.K.M."/>
            <person name="Huang Y."/>
            <person name="Loman N.J."/>
            <person name="Snyder L.A.S."/>
            <person name="Cai J.J."/>
            <person name="Huang J.-D."/>
            <person name="Mak W."/>
            <person name="Pallen M.J."/>
            <person name="Lok S."/>
            <person name="Yuen K.-Y."/>
        </authorList>
    </citation>
    <scope>NUCLEOTIDE SEQUENCE [LARGE SCALE GENOMIC DNA]</scope>
    <source>
        <strain>HLHK9</strain>
    </source>
</reference>
<protein>
    <recommendedName>
        <fullName evidence="1">Ribosomal protein L11 methyltransferase</fullName>
        <shortName evidence="1">L11 Mtase</shortName>
        <ecNumber evidence="1">2.1.1.-</ecNumber>
    </recommendedName>
</protein>
<sequence>MSWQQVAIDADSRIAERFADTLMELGALSTAIEDAAAGTEFEQPIFGEPGEPVDRLWEQSRIIVLFAADADVAMLIAAAAGEAGMPTPVYTVEAVESQDWVRLTQSQFDPIRISGRLWITPTWHDAPDANAINLALDPGLAFGTGSHPTTRLCLQWLDANICGGESVLDYGCGSGILAIAAIKLGATDVTGIDIDPQAVQASRDNAVQNQVTAAFGLPDTLEDGRQFDVLVANILANPLRMLGDLLASHVRAGGRIVLSGILEEQAQELSELYSAWFEMDPPVFDEGWTRLSGVRRA</sequence>
<name>PRMA_LARHH</name>
<feature type="chain" id="PRO_1000192641" description="Ribosomal protein L11 methyltransferase">
    <location>
        <begin position="1"/>
        <end position="297"/>
    </location>
</feature>
<feature type="binding site" evidence="1">
    <location>
        <position position="150"/>
    </location>
    <ligand>
        <name>S-adenosyl-L-methionine</name>
        <dbReference type="ChEBI" id="CHEBI:59789"/>
    </ligand>
</feature>
<feature type="binding site" evidence="1">
    <location>
        <position position="171"/>
    </location>
    <ligand>
        <name>S-adenosyl-L-methionine</name>
        <dbReference type="ChEBI" id="CHEBI:59789"/>
    </ligand>
</feature>
<feature type="binding site" evidence="1">
    <location>
        <position position="193"/>
    </location>
    <ligand>
        <name>S-adenosyl-L-methionine</name>
        <dbReference type="ChEBI" id="CHEBI:59789"/>
    </ligand>
</feature>
<feature type="binding site" evidence="1">
    <location>
        <position position="233"/>
    </location>
    <ligand>
        <name>S-adenosyl-L-methionine</name>
        <dbReference type="ChEBI" id="CHEBI:59789"/>
    </ligand>
</feature>
<proteinExistence type="inferred from homology"/>
<comment type="function">
    <text evidence="1">Methylates ribosomal protein L11.</text>
</comment>
<comment type="catalytic activity">
    <reaction evidence="1">
        <text>L-lysyl-[protein] + 3 S-adenosyl-L-methionine = N(6),N(6),N(6)-trimethyl-L-lysyl-[protein] + 3 S-adenosyl-L-homocysteine + 3 H(+)</text>
        <dbReference type="Rhea" id="RHEA:54192"/>
        <dbReference type="Rhea" id="RHEA-COMP:9752"/>
        <dbReference type="Rhea" id="RHEA-COMP:13826"/>
        <dbReference type="ChEBI" id="CHEBI:15378"/>
        <dbReference type="ChEBI" id="CHEBI:29969"/>
        <dbReference type="ChEBI" id="CHEBI:57856"/>
        <dbReference type="ChEBI" id="CHEBI:59789"/>
        <dbReference type="ChEBI" id="CHEBI:61961"/>
    </reaction>
</comment>
<comment type="subcellular location">
    <subcellularLocation>
        <location evidence="1">Cytoplasm</location>
    </subcellularLocation>
</comment>
<comment type="similarity">
    <text evidence="1">Belongs to the methyltransferase superfamily. PrmA family.</text>
</comment>
<dbReference type="EC" id="2.1.1.-" evidence="1"/>
<dbReference type="EMBL" id="CP001154">
    <property type="protein sequence ID" value="ACO73594.1"/>
    <property type="molecule type" value="Genomic_DNA"/>
</dbReference>
<dbReference type="RefSeq" id="WP_012696086.1">
    <property type="nucleotide sequence ID" value="NC_012559.1"/>
</dbReference>
<dbReference type="SMR" id="C1DCV9"/>
<dbReference type="STRING" id="557598.LHK_00601"/>
<dbReference type="KEGG" id="lhk:LHK_00601"/>
<dbReference type="eggNOG" id="COG2264">
    <property type="taxonomic scope" value="Bacteria"/>
</dbReference>
<dbReference type="HOGENOM" id="CLU_049382_4_1_4"/>
<dbReference type="Proteomes" id="UP000002010">
    <property type="component" value="Chromosome"/>
</dbReference>
<dbReference type="GO" id="GO:0005829">
    <property type="term" value="C:cytosol"/>
    <property type="evidence" value="ECO:0007669"/>
    <property type="project" value="TreeGrafter"/>
</dbReference>
<dbReference type="GO" id="GO:0016279">
    <property type="term" value="F:protein-lysine N-methyltransferase activity"/>
    <property type="evidence" value="ECO:0007669"/>
    <property type="project" value="TreeGrafter"/>
</dbReference>
<dbReference type="GO" id="GO:0032259">
    <property type="term" value="P:methylation"/>
    <property type="evidence" value="ECO:0007669"/>
    <property type="project" value="UniProtKB-KW"/>
</dbReference>
<dbReference type="CDD" id="cd02440">
    <property type="entry name" value="AdoMet_MTases"/>
    <property type="match status" value="1"/>
</dbReference>
<dbReference type="Gene3D" id="3.40.50.150">
    <property type="entry name" value="Vaccinia Virus protein VP39"/>
    <property type="match status" value="1"/>
</dbReference>
<dbReference type="HAMAP" id="MF_00735">
    <property type="entry name" value="Methyltr_PrmA"/>
    <property type="match status" value="1"/>
</dbReference>
<dbReference type="InterPro" id="IPR050078">
    <property type="entry name" value="Ribosomal_L11_MeTrfase_PrmA"/>
</dbReference>
<dbReference type="InterPro" id="IPR004498">
    <property type="entry name" value="Ribosomal_PrmA_MeTrfase"/>
</dbReference>
<dbReference type="InterPro" id="IPR029063">
    <property type="entry name" value="SAM-dependent_MTases_sf"/>
</dbReference>
<dbReference type="NCBIfam" id="TIGR00406">
    <property type="entry name" value="prmA"/>
    <property type="match status" value="1"/>
</dbReference>
<dbReference type="PANTHER" id="PTHR43648">
    <property type="entry name" value="ELECTRON TRANSFER FLAVOPROTEIN BETA SUBUNIT LYSINE METHYLTRANSFERASE"/>
    <property type="match status" value="1"/>
</dbReference>
<dbReference type="PANTHER" id="PTHR43648:SF1">
    <property type="entry name" value="ELECTRON TRANSFER FLAVOPROTEIN BETA SUBUNIT LYSINE METHYLTRANSFERASE"/>
    <property type="match status" value="1"/>
</dbReference>
<dbReference type="Pfam" id="PF06325">
    <property type="entry name" value="PrmA"/>
    <property type="match status" value="1"/>
</dbReference>
<dbReference type="PIRSF" id="PIRSF000401">
    <property type="entry name" value="RPL11_MTase"/>
    <property type="match status" value="1"/>
</dbReference>
<dbReference type="SUPFAM" id="SSF53335">
    <property type="entry name" value="S-adenosyl-L-methionine-dependent methyltransferases"/>
    <property type="match status" value="1"/>
</dbReference>
<accession>C1DCV9</accession>
<gene>
    <name evidence="1" type="primary">prmA</name>
    <name type="ordered locus">LHK_00601</name>
</gene>
<evidence type="ECO:0000255" key="1">
    <source>
        <dbReference type="HAMAP-Rule" id="MF_00735"/>
    </source>
</evidence>
<organism>
    <name type="scientific">Laribacter hongkongensis (strain HLHK9)</name>
    <dbReference type="NCBI Taxonomy" id="557598"/>
    <lineage>
        <taxon>Bacteria</taxon>
        <taxon>Pseudomonadati</taxon>
        <taxon>Pseudomonadota</taxon>
        <taxon>Betaproteobacteria</taxon>
        <taxon>Neisseriales</taxon>
        <taxon>Aquaspirillaceae</taxon>
        <taxon>Laribacter</taxon>
    </lineage>
</organism>
<keyword id="KW-0963">Cytoplasm</keyword>
<keyword id="KW-0489">Methyltransferase</keyword>
<keyword id="KW-1185">Reference proteome</keyword>
<keyword id="KW-0949">S-adenosyl-L-methionine</keyword>
<keyword id="KW-0808">Transferase</keyword>